<accession>P0DRG0</accession>
<protein>
    <recommendedName>
        <fullName evidence="2">Cryptide Pep-15</fullName>
    </recommendedName>
</protein>
<sequence>RPPHNPGFLTVYN</sequence>
<proteinExistence type="evidence at protein level"/>
<name>CRY15_TITOB</name>
<keyword id="KW-0903">Direct protein sequencing</keyword>
<keyword id="KW-0964">Secreted</keyword>
<feature type="peptide" id="PRO_0000461750" description="Cryptide Pep-15" evidence="1">
    <location>
        <begin position="1"/>
        <end position="13"/>
    </location>
</feature>
<comment type="subcellular location">
    <subcellularLocation>
        <location evidence="1">Secreted</location>
    </subcellularLocation>
</comment>
<comment type="tissue specificity">
    <text evidence="3">Expressed by the venom gland.</text>
</comment>
<comment type="mass spectrometry"/>
<dbReference type="GO" id="GO:0005576">
    <property type="term" value="C:extracellular region"/>
    <property type="evidence" value="ECO:0007669"/>
    <property type="project" value="UniProtKB-SubCell"/>
</dbReference>
<organism>
    <name type="scientific">Tityus obscurus</name>
    <name type="common">Amazonian scorpion</name>
    <name type="synonym">Tityus cambridgei</name>
    <dbReference type="NCBI Taxonomy" id="1221240"/>
    <lineage>
        <taxon>Eukaryota</taxon>
        <taxon>Metazoa</taxon>
        <taxon>Ecdysozoa</taxon>
        <taxon>Arthropoda</taxon>
        <taxon>Chelicerata</taxon>
        <taxon>Arachnida</taxon>
        <taxon>Scorpiones</taxon>
        <taxon>Buthida</taxon>
        <taxon>Buthoidea</taxon>
        <taxon>Buthidae</taxon>
        <taxon>Tityus</taxon>
    </lineage>
</organism>
<evidence type="ECO:0000269" key="1">
    <source>
    </source>
</evidence>
<evidence type="ECO:0000303" key="2">
    <source>
    </source>
</evidence>
<evidence type="ECO:0000305" key="3">
    <source>
    </source>
</evidence>
<reference key="1">
    <citation type="journal article" date="2018" name="J. Proteomics">
        <title>Profiling the short, linear, non-disulfide bond-containing peptidome from the venom of the scorpion Tityus obscurus.</title>
        <authorList>
            <person name="Dias N.B."/>
            <person name="de Souza B.M."/>
            <person name="Cocchi F.K."/>
            <person name="Chalkidis H.M."/>
            <person name="Dorce V.A.C."/>
            <person name="Palma M.S."/>
        </authorList>
    </citation>
    <scope>PROTEIN SEQUENCE</scope>
    <scope>IDENTIFICATION BY MASS SPECTROMETRY</scope>
    <scope>MASS SPECTROMETRY</scope>
    <scope>SUBCELLULAR LOCATION</scope>
    <source>
        <tissue>Venom</tissue>
    </source>
</reference>